<gene>
    <name evidence="1" type="primary">atpF2</name>
    <name type="ordered locus">MCA2701</name>
</gene>
<name>ATPF2_METCA</name>
<reference key="1">
    <citation type="journal article" date="2004" name="PLoS Biol.">
        <title>Genomic insights into methanotrophy: the complete genome sequence of Methylococcus capsulatus (Bath).</title>
        <authorList>
            <person name="Ward N.L."/>
            <person name="Larsen O."/>
            <person name="Sakwa J."/>
            <person name="Bruseth L."/>
            <person name="Khouri H.M."/>
            <person name="Durkin A.S."/>
            <person name="Dimitrov G."/>
            <person name="Jiang L."/>
            <person name="Scanlan D."/>
            <person name="Kang K.H."/>
            <person name="Lewis M.R."/>
            <person name="Nelson K.E."/>
            <person name="Methe B.A."/>
            <person name="Wu M."/>
            <person name="Heidelberg J.F."/>
            <person name="Paulsen I.T."/>
            <person name="Fouts D.E."/>
            <person name="Ravel J."/>
            <person name="Tettelin H."/>
            <person name="Ren Q."/>
            <person name="Read T.D."/>
            <person name="DeBoy R.T."/>
            <person name="Seshadri R."/>
            <person name="Salzberg S.L."/>
            <person name="Jensen H.B."/>
            <person name="Birkeland N.K."/>
            <person name="Nelson W.C."/>
            <person name="Dodson R.J."/>
            <person name="Grindhaug S.H."/>
            <person name="Holt I.E."/>
            <person name="Eidhammer I."/>
            <person name="Jonasen I."/>
            <person name="Vanaken S."/>
            <person name="Utterback T.R."/>
            <person name="Feldblyum T.V."/>
            <person name="Fraser C.M."/>
            <person name="Lillehaug J.R."/>
            <person name="Eisen J.A."/>
        </authorList>
    </citation>
    <scope>NUCLEOTIDE SEQUENCE [LARGE SCALE GENOMIC DNA]</scope>
    <source>
        <strain>ATCC 33009 / NCIMB 11132 / Bath</strain>
    </source>
</reference>
<evidence type="ECO:0000255" key="1">
    <source>
        <dbReference type="HAMAP-Rule" id="MF_01398"/>
    </source>
</evidence>
<protein>
    <recommendedName>
        <fullName evidence="1">ATP synthase subunit b 2</fullName>
    </recommendedName>
    <alternativeName>
        <fullName evidence="1">ATP synthase F(0) sector subunit b 2</fullName>
    </alternativeName>
    <alternativeName>
        <fullName evidence="1">ATPase subunit I 2</fullName>
    </alternativeName>
    <alternativeName>
        <fullName evidence="1">F-type ATPase subunit b 2</fullName>
        <shortName evidence="1">F-ATPase subunit b 2</shortName>
    </alternativeName>
</protein>
<feature type="chain" id="PRO_0000368590" description="ATP synthase subunit b 2">
    <location>
        <begin position="1"/>
        <end position="253"/>
    </location>
</feature>
<feature type="transmembrane region" description="Helical" evidence="1">
    <location>
        <begin position="9"/>
        <end position="27"/>
    </location>
</feature>
<proteinExistence type="inferred from homology"/>
<dbReference type="EMBL" id="AE017282">
    <property type="protein sequence ID" value="AAU91246.1"/>
    <property type="molecule type" value="Genomic_DNA"/>
</dbReference>
<dbReference type="RefSeq" id="WP_010961912.1">
    <property type="nucleotide sequence ID" value="NC_002977.6"/>
</dbReference>
<dbReference type="SMR" id="Q603U6"/>
<dbReference type="STRING" id="243233.MCA2701"/>
<dbReference type="GeneID" id="88224880"/>
<dbReference type="KEGG" id="mca:MCA2701"/>
<dbReference type="eggNOG" id="COG0711">
    <property type="taxonomic scope" value="Bacteria"/>
</dbReference>
<dbReference type="eggNOG" id="COG0712">
    <property type="taxonomic scope" value="Bacteria"/>
</dbReference>
<dbReference type="HOGENOM" id="CLU_070737_0_0_6"/>
<dbReference type="Proteomes" id="UP000006821">
    <property type="component" value="Chromosome"/>
</dbReference>
<dbReference type="GO" id="GO:0005886">
    <property type="term" value="C:plasma membrane"/>
    <property type="evidence" value="ECO:0007669"/>
    <property type="project" value="UniProtKB-SubCell"/>
</dbReference>
<dbReference type="GO" id="GO:0045259">
    <property type="term" value="C:proton-transporting ATP synthase complex"/>
    <property type="evidence" value="ECO:0007669"/>
    <property type="project" value="UniProtKB-KW"/>
</dbReference>
<dbReference type="GO" id="GO:0046933">
    <property type="term" value="F:proton-transporting ATP synthase activity, rotational mechanism"/>
    <property type="evidence" value="ECO:0007669"/>
    <property type="project" value="UniProtKB-UniRule"/>
</dbReference>
<dbReference type="GO" id="GO:0046961">
    <property type="term" value="F:proton-transporting ATPase activity, rotational mechanism"/>
    <property type="evidence" value="ECO:0007669"/>
    <property type="project" value="TreeGrafter"/>
</dbReference>
<dbReference type="CDD" id="cd06503">
    <property type="entry name" value="ATP-synt_Fo_b"/>
    <property type="match status" value="1"/>
</dbReference>
<dbReference type="HAMAP" id="MF_01398">
    <property type="entry name" value="ATP_synth_b_bprime"/>
    <property type="match status" value="1"/>
</dbReference>
<dbReference type="InterPro" id="IPR002146">
    <property type="entry name" value="ATP_synth_b/b'su_bac/chlpt"/>
</dbReference>
<dbReference type="InterPro" id="IPR050059">
    <property type="entry name" value="ATP_synthase_B_chain"/>
</dbReference>
<dbReference type="InterPro" id="IPR000711">
    <property type="entry name" value="ATPase_OSCP/dsu"/>
</dbReference>
<dbReference type="PANTHER" id="PTHR33445">
    <property type="entry name" value="ATP SYNTHASE SUBUNIT B', CHLOROPLASTIC"/>
    <property type="match status" value="1"/>
</dbReference>
<dbReference type="PANTHER" id="PTHR33445:SF2">
    <property type="entry name" value="ATP SYNTHASE SUBUNIT B', CHLOROPLASTIC"/>
    <property type="match status" value="1"/>
</dbReference>
<dbReference type="Pfam" id="PF00430">
    <property type="entry name" value="ATP-synt_B"/>
    <property type="match status" value="1"/>
</dbReference>
<dbReference type="Pfam" id="PF00213">
    <property type="entry name" value="OSCP"/>
    <property type="match status" value="1"/>
</dbReference>
<sequence>MDLNPSTFVLEIVNFLVLVWLLKRFLYQPVSAAIEERRRQIARTVAEARDTQTAAETLRMQYESRLADWESEKRQAREAFKQEIEAERQRALDELEKALDAEREKARVLIERQRRDMESDLERQALRLSRQFASRFLERLAGPEMEAALLRMFGEDLAAMSPEQWQALTRALEEQEHPEAEIASAFPLKPESCAELTEMIEARTGRAVAWRFREDPALICGIRLRAGHRVLAANVGEELKFFADGAENSLGGG</sequence>
<comment type="function">
    <text evidence="1">F(1)F(0) ATP synthase produces ATP from ADP in the presence of a proton or sodium gradient. F-type ATPases consist of two structural domains, F(1) containing the extramembraneous catalytic core and F(0) containing the membrane proton channel, linked together by a central stalk and a peripheral stalk. During catalysis, ATP synthesis in the catalytic domain of F(1) is coupled via a rotary mechanism of the central stalk subunits to proton translocation.</text>
</comment>
<comment type="function">
    <text evidence="1">Component of the F(0) channel, it forms part of the peripheral stalk, linking F(1) to F(0).</text>
</comment>
<comment type="subunit">
    <text evidence="1">F-type ATPases have 2 components, F(1) - the catalytic core - and F(0) - the membrane proton channel. F(1) has five subunits: alpha(3), beta(3), gamma(1), delta(1), epsilon(1). F(0) has three main subunits: a(1), b(2) and c(10-14). The alpha and beta chains form an alternating ring which encloses part of the gamma chain. F(1) is attached to F(0) by a central stalk formed by the gamma and epsilon chains, while a peripheral stalk is formed by the delta and b chains.</text>
</comment>
<comment type="subcellular location">
    <subcellularLocation>
        <location evidence="1">Cell inner membrane</location>
        <topology evidence="1">Single-pass membrane protein</topology>
    </subcellularLocation>
</comment>
<comment type="similarity">
    <text evidence="1">Belongs to the ATPase B chain family.</text>
</comment>
<keyword id="KW-0066">ATP synthesis</keyword>
<keyword id="KW-0997">Cell inner membrane</keyword>
<keyword id="KW-1003">Cell membrane</keyword>
<keyword id="KW-0138">CF(0)</keyword>
<keyword id="KW-0375">Hydrogen ion transport</keyword>
<keyword id="KW-0406">Ion transport</keyword>
<keyword id="KW-0472">Membrane</keyword>
<keyword id="KW-1185">Reference proteome</keyword>
<keyword id="KW-0812">Transmembrane</keyword>
<keyword id="KW-1133">Transmembrane helix</keyword>
<keyword id="KW-0813">Transport</keyword>
<accession>Q603U6</accession>
<organism>
    <name type="scientific">Methylococcus capsulatus (strain ATCC 33009 / NCIMB 11132 / Bath)</name>
    <dbReference type="NCBI Taxonomy" id="243233"/>
    <lineage>
        <taxon>Bacteria</taxon>
        <taxon>Pseudomonadati</taxon>
        <taxon>Pseudomonadota</taxon>
        <taxon>Gammaproteobacteria</taxon>
        <taxon>Methylococcales</taxon>
        <taxon>Methylococcaceae</taxon>
        <taxon>Methylococcus</taxon>
    </lineage>
</organism>